<proteinExistence type="inferred from homology"/>
<accession>A4YCQ1</accession>
<gene>
    <name evidence="1" type="primary">upp</name>
    <name type="ordered locus">Msed_0026</name>
</gene>
<feature type="chain" id="PRO_1000073130" description="Uracil phosphoribosyltransferase">
    <location>
        <begin position="1"/>
        <end position="215"/>
    </location>
</feature>
<feature type="binding site" evidence="1">
    <location>
        <begin position="30"/>
        <end position="34"/>
    </location>
    <ligand>
        <name>GTP</name>
        <dbReference type="ChEBI" id="CHEBI:37565"/>
    </ligand>
</feature>
<feature type="binding site" evidence="1">
    <location>
        <position position="80"/>
    </location>
    <ligand>
        <name>5-phospho-alpha-D-ribose 1-diphosphate</name>
        <dbReference type="ChEBI" id="CHEBI:58017"/>
    </ligand>
</feature>
<feature type="binding site" evidence="1">
    <location>
        <position position="105"/>
    </location>
    <ligand>
        <name>5-phospho-alpha-D-ribose 1-diphosphate</name>
        <dbReference type="ChEBI" id="CHEBI:58017"/>
    </ligand>
</feature>
<feature type="binding site" evidence="1">
    <location>
        <begin position="139"/>
        <end position="147"/>
    </location>
    <ligand>
        <name>5-phospho-alpha-D-ribose 1-diphosphate</name>
        <dbReference type="ChEBI" id="CHEBI:58017"/>
    </ligand>
</feature>
<feature type="binding site" evidence="1">
    <location>
        <position position="202"/>
    </location>
    <ligand>
        <name>uracil</name>
        <dbReference type="ChEBI" id="CHEBI:17568"/>
    </ligand>
</feature>
<feature type="binding site" evidence="1">
    <location>
        <begin position="207"/>
        <end position="209"/>
    </location>
    <ligand>
        <name>uracil</name>
        <dbReference type="ChEBI" id="CHEBI:17568"/>
    </ligand>
</feature>
<feature type="binding site" evidence="1">
    <location>
        <position position="208"/>
    </location>
    <ligand>
        <name>5-phospho-alpha-D-ribose 1-diphosphate</name>
        <dbReference type="ChEBI" id="CHEBI:58017"/>
    </ligand>
</feature>
<sequence>MAVFLLDKPLFLHILTQLRDIKTDQIMFRKGMVRLGRLIGYEIANHLDFDIVKVVTPLGVEAKGVVIKDLDNIMIVNVLRAATPLVEGLLKAFPAAKQGVVAASRREMESSSPPTEMEVEITYMKIPKISKNDIAIIADPMIATASTMMRILGMVSQLQPKRIIIASVIASEYGITKIRNKYPDVDIFTVSIDPEINNRGYIVPGLGDAGDRSFG</sequence>
<reference key="1">
    <citation type="journal article" date="2008" name="Appl. Environ. Microbiol.">
        <title>The genome sequence of the metal-mobilizing, extremely thermoacidophilic archaeon Metallosphaera sedula provides insights into bioleaching-associated metabolism.</title>
        <authorList>
            <person name="Auernik K.S."/>
            <person name="Maezato Y."/>
            <person name="Blum P.H."/>
            <person name="Kelly R.M."/>
        </authorList>
    </citation>
    <scope>NUCLEOTIDE SEQUENCE [LARGE SCALE GENOMIC DNA]</scope>
    <source>
        <strain>ATCC 51363 / DSM 5348 / JCM 9185 / NBRC 15509 / TH2</strain>
    </source>
</reference>
<protein>
    <recommendedName>
        <fullName evidence="1">Uracil phosphoribosyltransferase</fullName>
        <ecNumber evidence="1">2.4.2.9</ecNumber>
    </recommendedName>
    <alternativeName>
        <fullName evidence="1">UMP pyrophosphorylase</fullName>
    </alternativeName>
    <alternativeName>
        <fullName evidence="1">UPRTase</fullName>
    </alternativeName>
</protein>
<name>UPP_METS5</name>
<organism>
    <name type="scientific">Metallosphaera sedula (strain ATCC 51363 / DSM 5348 / JCM 9185 / NBRC 15509 / TH2)</name>
    <dbReference type="NCBI Taxonomy" id="399549"/>
    <lineage>
        <taxon>Archaea</taxon>
        <taxon>Thermoproteota</taxon>
        <taxon>Thermoprotei</taxon>
        <taxon>Sulfolobales</taxon>
        <taxon>Sulfolobaceae</taxon>
        <taxon>Metallosphaera</taxon>
    </lineage>
</organism>
<dbReference type="EC" id="2.4.2.9" evidence="1"/>
<dbReference type="EMBL" id="CP000682">
    <property type="protein sequence ID" value="ABP94203.1"/>
    <property type="molecule type" value="Genomic_DNA"/>
</dbReference>
<dbReference type="RefSeq" id="WP_011921172.1">
    <property type="nucleotide sequence ID" value="NZ_CP139956.1"/>
</dbReference>
<dbReference type="SMR" id="A4YCQ1"/>
<dbReference type="STRING" id="399549.Msed_0026"/>
<dbReference type="GeneID" id="97614965"/>
<dbReference type="KEGG" id="mse:Msed_0026"/>
<dbReference type="eggNOG" id="arCOG04128">
    <property type="taxonomic scope" value="Archaea"/>
</dbReference>
<dbReference type="HOGENOM" id="CLU_067096_2_0_2"/>
<dbReference type="UniPathway" id="UPA00574">
    <property type="reaction ID" value="UER00636"/>
</dbReference>
<dbReference type="Proteomes" id="UP000000242">
    <property type="component" value="Chromosome"/>
</dbReference>
<dbReference type="GO" id="GO:0005525">
    <property type="term" value="F:GTP binding"/>
    <property type="evidence" value="ECO:0007669"/>
    <property type="project" value="UniProtKB-KW"/>
</dbReference>
<dbReference type="GO" id="GO:0000287">
    <property type="term" value="F:magnesium ion binding"/>
    <property type="evidence" value="ECO:0007669"/>
    <property type="project" value="UniProtKB-UniRule"/>
</dbReference>
<dbReference type="GO" id="GO:0004845">
    <property type="term" value="F:uracil phosphoribosyltransferase activity"/>
    <property type="evidence" value="ECO:0007669"/>
    <property type="project" value="UniProtKB-UniRule"/>
</dbReference>
<dbReference type="GO" id="GO:0044206">
    <property type="term" value="P:UMP salvage"/>
    <property type="evidence" value="ECO:0007669"/>
    <property type="project" value="UniProtKB-UniRule"/>
</dbReference>
<dbReference type="GO" id="GO:0006223">
    <property type="term" value="P:uracil salvage"/>
    <property type="evidence" value="ECO:0007669"/>
    <property type="project" value="InterPro"/>
</dbReference>
<dbReference type="CDD" id="cd06223">
    <property type="entry name" value="PRTases_typeI"/>
    <property type="match status" value="1"/>
</dbReference>
<dbReference type="Gene3D" id="3.40.50.2020">
    <property type="match status" value="1"/>
</dbReference>
<dbReference type="HAMAP" id="MF_01218_A">
    <property type="entry name" value="Upp_A"/>
    <property type="match status" value="1"/>
</dbReference>
<dbReference type="InterPro" id="IPR000836">
    <property type="entry name" value="PRibTrfase_dom"/>
</dbReference>
<dbReference type="InterPro" id="IPR029057">
    <property type="entry name" value="PRTase-like"/>
</dbReference>
<dbReference type="InterPro" id="IPR034331">
    <property type="entry name" value="Upp_A"/>
</dbReference>
<dbReference type="InterPro" id="IPR005765">
    <property type="entry name" value="Ura_phspho_trans"/>
</dbReference>
<dbReference type="NCBIfam" id="NF001097">
    <property type="entry name" value="PRK00129.1"/>
    <property type="match status" value="1"/>
</dbReference>
<dbReference type="NCBIfam" id="TIGR01091">
    <property type="entry name" value="upp"/>
    <property type="match status" value="1"/>
</dbReference>
<dbReference type="Pfam" id="PF14681">
    <property type="entry name" value="UPRTase"/>
    <property type="match status" value="1"/>
</dbReference>
<dbReference type="SUPFAM" id="SSF53271">
    <property type="entry name" value="PRTase-like"/>
    <property type="match status" value="1"/>
</dbReference>
<keyword id="KW-0021">Allosteric enzyme</keyword>
<keyword id="KW-0328">Glycosyltransferase</keyword>
<keyword id="KW-0342">GTP-binding</keyword>
<keyword id="KW-0460">Magnesium</keyword>
<keyword id="KW-0547">Nucleotide-binding</keyword>
<keyword id="KW-1185">Reference proteome</keyword>
<keyword id="KW-0808">Transferase</keyword>
<evidence type="ECO:0000255" key="1">
    <source>
        <dbReference type="HAMAP-Rule" id="MF_01218"/>
    </source>
</evidence>
<comment type="function">
    <text evidence="1">Catalyzes the conversion of uracil and 5-phospho-alpha-D-ribose 1-diphosphate (PRPP) to UMP and diphosphate.</text>
</comment>
<comment type="catalytic activity">
    <reaction evidence="1">
        <text>UMP + diphosphate = 5-phospho-alpha-D-ribose 1-diphosphate + uracil</text>
        <dbReference type="Rhea" id="RHEA:13017"/>
        <dbReference type="ChEBI" id="CHEBI:17568"/>
        <dbReference type="ChEBI" id="CHEBI:33019"/>
        <dbReference type="ChEBI" id="CHEBI:57865"/>
        <dbReference type="ChEBI" id="CHEBI:58017"/>
        <dbReference type="EC" id="2.4.2.9"/>
    </reaction>
</comment>
<comment type="cofactor">
    <cofactor evidence="1">
        <name>Mg(2+)</name>
        <dbReference type="ChEBI" id="CHEBI:18420"/>
    </cofactor>
    <text evidence="1">Binds 1 Mg(2+) ion per subunit. The magnesium is bound as Mg-PRPP.</text>
</comment>
<comment type="activity regulation">
    <text evidence="1">Allosterically activated by GTP.</text>
</comment>
<comment type="pathway">
    <text evidence="1">Pyrimidine metabolism; UMP biosynthesis via salvage pathway; UMP from uracil: step 1/1.</text>
</comment>
<comment type="similarity">
    <text evidence="1">Belongs to the UPRTase family.</text>
</comment>